<comment type="function">
    <text evidence="1">Conjugation of reduced glutathione to a wide number of exogenous and endogenous hydrophobic electrophiles.</text>
</comment>
<comment type="catalytic activity">
    <reaction evidence="1">
        <text>RX + glutathione = an S-substituted glutathione + a halide anion + H(+)</text>
        <dbReference type="Rhea" id="RHEA:16437"/>
        <dbReference type="ChEBI" id="CHEBI:15378"/>
        <dbReference type="ChEBI" id="CHEBI:16042"/>
        <dbReference type="ChEBI" id="CHEBI:17792"/>
        <dbReference type="ChEBI" id="CHEBI:57925"/>
        <dbReference type="ChEBI" id="CHEBI:90779"/>
        <dbReference type="EC" id="2.5.1.18"/>
    </reaction>
</comment>
<comment type="subunit">
    <text evidence="3">Homodimer.</text>
</comment>
<comment type="subcellular location">
    <subcellularLocation>
        <location evidence="4">Cytoplasm</location>
        <location evidence="4">Cytosol</location>
    </subcellularLocation>
    <subcellularLocation>
        <location evidence="4">Nucleus</location>
    </subcellularLocation>
</comment>
<comment type="tissue specificity">
    <text evidence="4">In liver, highest expression found in central vein limiting plate hepatocytes. Also expressed in interlobular bile duct epithelial cells. In lung, expressed in club cells and ciliated cells of the bronchiolar epithelium and in type II alveolar cells of the lung parenchyma.</text>
</comment>
<comment type="similarity">
    <text evidence="6">Belongs to the GST superfamily. Theta family.</text>
</comment>
<organism>
    <name type="scientific">Mus musculus</name>
    <name type="common">Mouse</name>
    <dbReference type="NCBI Taxonomy" id="10090"/>
    <lineage>
        <taxon>Eukaryota</taxon>
        <taxon>Metazoa</taxon>
        <taxon>Chordata</taxon>
        <taxon>Craniata</taxon>
        <taxon>Vertebrata</taxon>
        <taxon>Euteleostomi</taxon>
        <taxon>Mammalia</taxon>
        <taxon>Eutheria</taxon>
        <taxon>Euarchontoglires</taxon>
        <taxon>Glires</taxon>
        <taxon>Rodentia</taxon>
        <taxon>Myomorpha</taxon>
        <taxon>Muroidea</taxon>
        <taxon>Muridae</taxon>
        <taxon>Murinae</taxon>
        <taxon>Mus</taxon>
        <taxon>Mus</taxon>
    </lineage>
</organism>
<feature type="chain" id="PRO_0000185941" description="Glutathione S-transferase theta-2">
    <location>
        <begin position="1"/>
        <end position="244"/>
    </location>
</feature>
<feature type="domain" description="GST N-terminal">
    <location>
        <begin position="2"/>
        <end position="82"/>
    </location>
</feature>
<feature type="domain" description="GST C-terminal">
    <location>
        <begin position="88"/>
        <end position="230"/>
    </location>
</feature>
<feature type="binding site" evidence="2">
    <location>
        <begin position="40"/>
        <end position="41"/>
    </location>
    <ligand>
        <name>glutathione</name>
        <dbReference type="ChEBI" id="CHEBI:57925"/>
    </ligand>
</feature>
<feature type="binding site" evidence="2">
    <location>
        <begin position="53"/>
        <end position="54"/>
    </location>
    <ligand>
        <name>glutathione</name>
        <dbReference type="ChEBI" id="CHEBI:57925"/>
    </ligand>
</feature>
<feature type="binding site" evidence="2">
    <location>
        <begin position="66"/>
        <end position="67"/>
    </location>
    <ligand>
        <name>glutathione</name>
        <dbReference type="ChEBI" id="CHEBI:57925"/>
    </ligand>
</feature>
<feature type="binding site" evidence="2">
    <location>
        <begin position="104"/>
        <end position="107"/>
    </location>
    <ligand>
        <name>glutathione</name>
        <dbReference type="ChEBI" id="CHEBI:57925"/>
    </ligand>
</feature>
<feature type="sequence conflict" description="In Ref. 1; AAB03533." evidence="6" ref="1">
    <location>
        <position position="38"/>
    </location>
</feature>
<feature type="sequence conflict" description="In Ref. 1; AAB03533." evidence="6" ref="1">
    <original>S</original>
    <variation>R</variation>
    <location>
        <position position="67"/>
    </location>
</feature>
<feature type="sequence conflict" description="In Ref. 1; AAB03534." evidence="6" ref="1">
    <original>A</original>
    <variation>G</variation>
    <location>
        <position position="178"/>
    </location>
</feature>
<feature type="sequence conflict" description="In Ref. 1; AAB03534." evidence="6" ref="1">
    <original>C</original>
    <variation>Y</variation>
    <location>
        <position position="206"/>
    </location>
</feature>
<proteinExistence type="evidence at protein level"/>
<reference key="1">
    <citation type="journal article" date="1996" name="Genomics">
        <title>Characterization of a cDNA and gene encoding the mouse theta class glutathione transferase mGSTT2 and its localization to chromosome 10B5-C1.</title>
        <authorList>
            <person name="Whittington A.T."/>
            <person name="Webb G.C."/>
            <person name="Baker R.T."/>
            <person name="Board P.G."/>
        </authorList>
    </citation>
    <scope>NUCLEOTIDE SEQUENCE [GENOMIC DNA / MRNA]</scope>
    <source>
        <strain>129/Sv</strain>
        <strain>C57BL/6 X CBA</strain>
        <tissue>Liver</tissue>
    </source>
</reference>
<reference key="2">
    <citation type="journal article" date="1996" name="Biochem. J.">
        <title>The distribution of theta-class glutathione S-transferases in the liver and lung of mouse, rat and human.</title>
        <authorList>
            <person name="Mainwaring G.W."/>
            <person name="Williams S.M."/>
            <person name="Foster J.R."/>
            <person name="Tugwood J."/>
            <person name="Green T."/>
        </authorList>
    </citation>
    <scope>NUCLEOTIDE SEQUENCE [MRNA]</scope>
    <scope>SUBCELLULAR LOCATION</scope>
    <scope>TISSUE SPECIFICITY</scope>
    <source>
        <strain>C57BL/6 X C3H</strain>
        <tissue>Liver</tissue>
        <tissue>Lung</tissue>
    </source>
</reference>
<reference key="3">
    <citation type="journal article" date="2005" name="Science">
        <title>The transcriptional landscape of the mammalian genome.</title>
        <authorList>
            <person name="Carninci P."/>
            <person name="Kasukawa T."/>
            <person name="Katayama S."/>
            <person name="Gough J."/>
            <person name="Frith M.C."/>
            <person name="Maeda N."/>
            <person name="Oyama R."/>
            <person name="Ravasi T."/>
            <person name="Lenhard B."/>
            <person name="Wells C."/>
            <person name="Kodzius R."/>
            <person name="Shimokawa K."/>
            <person name="Bajic V.B."/>
            <person name="Brenner S.E."/>
            <person name="Batalov S."/>
            <person name="Forrest A.R."/>
            <person name="Zavolan M."/>
            <person name="Davis M.J."/>
            <person name="Wilming L.G."/>
            <person name="Aidinis V."/>
            <person name="Allen J.E."/>
            <person name="Ambesi-Impiombato A."/>
            <person name="Apweiler R."/>
            <person name="Aturaliya R.N."/>
            <person name="Bailey T.L."/>
            <person name="Bansal M."/>
            <person name="Baxter L."/>
            <person name="Beisel K.W."/>
            <person name="Bersano T."/>
            <person name="Bono H."/>
            <person name="Chalk A.M."/>
            <person name="Chiu K.P."/>
            <person name="Choudhary V."/>
            <person name="Christoffels A."/>
            <person name="Clutterbuck D.R."/>
            <person name="Crowe M.L."/>
            <person name="Dalla E."/>
            <person name="Dalrymple B.P."/>
            <person name="de Bono B."/>
            <person name="Della Gatta G."/>
            <person name="di Bernardo D."/>
            <person name="Down T."/>
            <person name="Engstrom P."/>
            <person name="Fagiolini M."/>
            <person name="Faulkner G."/>
            <person name="Fletcher C.F."/>
            <person name="Fukushima T."/>
            <person name="Furuno M."/>
            <person name="Futaki S."/>
            <person name="Gariboldi M."/>
            <person name="Georgii-Hemming P."/>
            <person name="Gingeras T.R."/>
            <person name="Gojobori T."/>
            <person name="Green R.E."/>
            <person name="Gustincich S."/>
            <person name="Harbers M."/>
            <person name="Hayashi Y."/>
            <person name="Hensch T.K."/>
            <person name="Hirokawa N."/>
            <person name="Hill D."/>
            <person name="Huminiecki L."/>
            <person name="Iacono M."/>
            <person name="Ikeo K."/>
            <person name="Iwama A."/>
            <person name="Ishikawa T."/>
            <person name="Jakt M."/>
            <person name="Kanapin A."/>
            <person name="Katoh M."/>
            <person name="Kawasawa Y."/>
            <person name="Kelso J."/>
            <person name="Kitamura H."/>
            <person name="Kitano H."/>
            <person name="Kollias G."/>
            <person name="Krishnan S.P."/>
            <person name="Kruger A."/>
            <person name="Kummerfeld S.K."/>
            <person name="Kurochkin I.V."/>
            <person name="Lareau L.F."/>
            <person name="Lazarevic D."/>
            <person name="Lipovich L."/>
            <person name="Liu J."/>
            <person name="Liuni S."/>
            <person name="McWilliam S."/>
            <person name="Madan Babu M."/>
            <person name="Madera M."/>
            <person name="Marchionni L."/>
            <person name="Matsuda H."/>
            <person name="Matsuzawa S."/>
            <person name="Miki H."/>
            <person name="Mignone F."/>
            <person name="Miyake S."/>
            <person name="Morris K."/>
            <person name="Mottagui-Tabar S."/>
            <person name="Mulder N."/>
            <person name="Nakano N."/>
            <person name="Nakauchi H."/>
            <person name="Ng P."/>
            <person name="Nilsson R."/>
            <person name="Nishiguchi S."/>
            <person name="Nishikawa S."/>
            <person name="Nori F."/>
            <person name="Ohara O."/>
            <person name="Okazaki Y."/>
            <person name="Orlando V."/>
            <person name="Pang K.C."/>
            <person name="Pavan W.J."/>
            <person name="Pavesi G."/>
            <person name="Pesole G."/>
            <person name="Petrovsky N."/>
            <person name="Piazza S."/>
            <person name="Reed J."/>
            <person name="Reid J.F."/>
            <person name="Ring B.Z."/>
            <person name="Ringwald M."/>
            <person name="Rost B."/>
            <person name="Ruan Y."/>
            <person name="Salzberg S.L."/>
            <person name="Sandelin A."/>
            <person name="Schneider C."/>
            <person name="Schoenbach C."/>
            <person name="Sekiguchi K."/>
            <person name="Semple C.A."/>
            <person name="Seno S."/>
            <person name="Sessa L."/>
            <person name="Sheng Y."/>
            <person name="Shibata Y."/>
            <person name="Shimada H."/>
            <person name="Shimada K."/>
            <person name="Silva D."/>
            <person name="Sinclair B."/>
            <person name="Sperling S."/>
            <person name="Stupka E."/>
            <person name="Sugiura K."/>
            <person name="Sultana R."/>
            <person name="Takenaka Y."/>
            <person name="Taki K."/>
            <person name="Tammoja K."/>
            <person name="Tan S.L."/>
            <person name="Tang S."/>
            <person name="Taylor M.S."/>
            <person name="Tegner J."/>
            <person name="Teichmann S.A."/>
            <person name="Ueda H.R."/>
            <person name="van Nimwegen E."/>
            <person name="Verardo R."/>
            <person name="Wei C.L."/>
            <person name="Yagi K."/>
            <person name="Yamanishi H."/>
            <person name="Zabarovsky E."/>
            <person name="Zhu S."/>
            <person name="Zimmer A."/>
            <person name="Hide W."/>
            <person name="Bult C."/>
            <person name="Grimmond S.M."/>
            <person name="Teasdale R.D."/>
            <person name="Liu E.T."/>
            <person name="Brusic V."/>
            <person name="Quackenbush J."/>
            <person name="Wahlestedt C."/>
            <person name="Mattick J.S."/>
            <person name="Hume D.A."/>
            <person name="Kai C."/>
            <person name="Sasaki D."/>
            <person name="Tomaru Y."/>
            <person name="Fukuda S."/>
            <person name="Kanamori-Katayama M."/>
            <person name="Suzuki M."/>
            <person name="Aoki J."/>
            <person name="Arakawa T."/>
            <person name="Iida J."/>
            <person name="Imamura K."/>
            <person name="Itoh M."/>
            <person name="Kato T."/>
            <person name="Kawaji H."/>
            <person name="Kawagashira N."/>
            <person name="Kawashima T."/>
            <person name="Kojima M."/>
            <person name="Kondo S."/>
            <person name="Konno H."/>
            <person name="Nakano K."/>
            <person name="Ninomiya N."/>
            <person name="Nishio T."/>
            <person name="Okada M."/>
            <person name="Plessy C."/>
            <person name="Shibata K."/>
            <person name="Shiraki T."/>
            <person name="Suzuki S."/>
            <person name="Tagami M."/>
            <person name="Waki K."/>
            <person name="Watahiki A."/>
            <person name="Okamura-Oho Y."/>
            <person name="Suzuki H."/>
            <person name="Kawai J."/>
            <person name="Hayashizaki Y."/>
        </authorList>
    </citation>
    <scope>NUCLEOTIDE SEQUENCE [LARGE SCALE MRNA]</scope>
    <source>
        <strain>C57BL/6J</strain>
        <tissue>Kidney</tissue>
        <tissue>Visual cortex</tissue>
    </source>
</reference>
<reference key="4">
    <citation type="journal article" date="2009" name="PLoS Biol.">
        <title>Lineage-specific biology revealed by a finished genome assembly of the mouse.</title>
        <authorList>
            <person name="Church D.M."/>
            <person name="Goodstadt L."/>
            <person name="Hillier L.W."/>
            <person name="Zody M.C."/>
            <person name="Goldstein S."/>
            <person name="She X."/>
            <person name="Bult C.J."/>
            <person name="Agarwala R."/>
            <person name="Cherry J.L."/>
            <person name="DiCuccio M."/>
            <person name="Hlavina W."/>
            <person name="Kapustin Y."/>
            <person name="Meric P."/>
            <person name="Maglott D."/>
            <person name="Birtle Z."/>
            <person name="Marques A.C."/>
            <person name="Graves T."/>
            <person name="Zhou S."/>
            <person name="Teague B."/>
            <person name="Potamousis K."/>
            <person name="Churas C."/>
            <person name="Place M."/>
            <person name="Herschleb J."/>
            <person name="Runnheim R."/>
            <person name="Forrest D."/>
            <person name="Amos-Landgraf J."/>
            <person name="Schwartz D.C."/>
            <person name="Cheng Z."/>
            <person name="Lindblad-Toh K."/>
            <person name="Eichler E.E."/>
            <person name="Ponting C.P."/>
        </authorList>
    </citation>
    <scope>NUCLEOTIDE SEQUENCE [LARGE SCALE GENOMIC DNA]</scope>
    <source>
        <strain>C57BL/6J</strain>
    </source>
</reference>
<reference key="5">
    <citation type="submission" date="2005-07" db="EMBL/GenBank/DDBJ databases">
        <authorList>
            <person name="Mural R.J."/>
            <person name="Adams M.D."/>
            <person name="Myers E.W."/>
            <person name="Smith H.O."/>
            <person name="Venter J.C."/>
        </authorList>
    </citation>
    <scope>NUCLEOTIDE SEQUENCE [LARGE SCALE GENOMIC DNA]</scope>
</reference>
<reference key="6">
    <citation type="journal article" date="2004" name="Genome Res.">
        <title>The status, quality, and expansion of the NIH full-length cDNA project: the Mammalian Gene Collection (MGC).</title>
        <authorList>
            <consortium name="The MGC Project Team"/>
        </authorList>
    </citation>
    <scope>NUCLEOTIDE SEQUENCE [LARGE SCALE MRNA]</scope>
    <source>
        <strain>Czech II</strain>
        <tissue>Mammary tumor</tissue>
    </source>
</reference>
<reference key="7">
    <citation type="journal article" date="2010" name="Cell">
        <title>A tissue-specific atlas of mouse protein phosphorylation and expression.</title>
        <authorList>
            <person name="Huttlin E.L."/>
            <person name="Jedrychowski M.P."/>
            <person name="Elias J.E."/>
            <person name="Goswami T."/>
            <person name="Rad R."/>
            <person name="Beausoleil S.A."/>
            <person name="Villen J."/>
            <person name="Haas W."/>
            <person name="Sowa M.E."/>
            <person name="Gygi S.P."/>
        </authorList>
    </citation>
    <scope>IDENTIFICATION BY MASS SPECTROMETRY [LARGE SCALE ANALYSIS]</scope>
    <source>
        <tissue>Brown adipose tissue</tissue>
        <tissue>Heart</tissue>
        <tissue>Kidney</tissue>
        <tissue>Liver</tissue>
        <tissue>Lung</tissue>
        <tissue>Pancreas</tissue>
        <tissue>Spleen</tissue>
        <tissue>Testis</tissue>
    </source>
</reference>
<protein>
    <recommendedName>
        <fullName>Glutathione S-transferase theta-2</fullName>
        <ecNumber evidence="1">2.5.1.18</ecNumber>
    </recommendedName>
    <alternativeName>
        <fullName evidence="5">GST class-theta-2</fullName>
    </alternativeName>
</protein>
<keyword id="KW-0963">Cytoplasm</keyword>
<keyword id="KW-0539">Nucleus</keyword>
<keyword id="KW-1185">Reference proteome</keyword>
<keyword id="KW-0808">Transferase</keyword>
<gene>
    <name evidence="5 7" type="primary">Gstt2</name>
</gene>
<name>GSTT2_MOUSE</name>
<accession>Q61133</accession>
<accession>Q61134</accession>
<accession>Q64472</accession>
<accession>Q91VB0</accession>
<sequence>MGLELYLDLLSQPSRAVYIFAKKNGIPFQTRTVDILKGQHMSEQFSQVNCLNKVPVLKDGSFVLTESTAILIYLSSKYQVADHWYPADLQARAQVHEYLGWHADNIRGTFGVLLWTKVLGPLIGVQVPQEKVERNRDRMVLVLQQLEDKFLRDRAFLVGQQVTLADLMSLEELMQPVALGYNLFEGRPQLTAWRERVEAFLGAELCQEAHSTILSILGQAAKKMLPVPPPEVHASMQLRIARIP</sequence>
<dbReference type="EC" id="2.5.1.18" evidence="1"/>
<dbReference type="EMBL" id="U48419">
    <property type="protein sequence ID" value="AAB03533.1"/>
    <property type="molecule type" value="Genomic_DNA"/>
</dbReference>
<dbReference type="EMBL" id="U48420">
    <property type="protein sequence ID" value="AAB03534.1"/>
    <property type="molecule type" value="mRNA"/>
</dbReference>
<dbReference type="EMBL" id="X98056">
    <property type="protein sequence ID" value="CAA66666.1"/>
    <property type="molecule type" value="mRNA"/>
</dbReference>
<dbReference type="EMBL" id="AK002392">
    <property type="protein sequence ID" value="BAB22065.1"/>
    <property type="molecule type" value="mRNA"/>
</dbReference>
<dbReference type="EMBL" id="AK158939">
    <property type="protein sequence ID" value="BAE34734.1"/>
    <property type="molecule type" value="mRNA"/>
</dbReference>
<dbReference type="EMBL" id="AC142499">
    <property type="status" value="NOT_ANNOTATED_CDS"/>
    <property type="molecule type" value="Genomic_DNA"/>
</dbReference>
<dbReference type="EMBL" id="CH466553">
    <property type="protein sequence ID" value="EDL31881.1"/>
    <property type="molecule type" value="Genomic_DNA"/>
</dbReference>
<dbReference type="EMBL" id="BC012707">
    <property type="protein sequence ID" value="AAH12707.1"/>
    <property type="molecule type" value="mRNA"/>
</dbReference>
<dbReference type="CCDS" id="CCDS48601.1"/>
<dbReference type="PIR" id="S71879">
    <property type="entry name" value="S71879"/>
</dbReference>
<dbReference type="RefSeq" id="NP_034491.2">
    <property type="nucleotide sequence ID" value="NM_010361.3"/>
</dbReference>
<dbReference type="RefSeq" id="XP_006513303.1">
    <property type="nucleotide sequence ID" value="XM_006513240.1"/>
</dbReference>
<dbReference type="RefSeq" id="XP_030100749.1">
    <property type="nucleotide sequence ID" value="XM_030244889.2"/>
</dbReference>
<dbReference type="SMR" id="Q61133"/>
<dbReference type="FunCoup" id="Q61133">
    <property type="interactions" value="1067"/>
</dbReference>
<dbReference type="STRING" id="10090.ENSMUSP00000151239"/>
<dbReference type="iPTMnet" id="Q61133"/>
<dbReference type="PhosphoSitePlus" id="Q61133"/>
<dbReference type="SwissPalm" id="Q61133"/>
<dbReference type="jPOST" id="Q61133"/>
<dbReference type="PaxDb" id="10090-ENSMUSP00000046324"/>
<dbReference type="PeptideAtlas" id="Q61133"/>
<dbReference type="ProteomicsDB" id="271481"/>
<dbReference type="DNASU" id="14872"/>
<dbReference type="Ensembl" id="ENSMUST00000038257.7">
    <property type="protein sequence ID" value="ENSMUSP00000046324.7"/>
    <property type="gene ID" value="ENSMUSG00000033318.8"/>
</dbReference>
<dbReference type="Ensembl" id="ENSMUST00000220440.2">
    <property type="protein sequence ID" value="ENSMUSP00000151239.2"/>
    <property type="gene ID" value="ENSMUSG00000033318.8"/>
</dbReference>
<dbReference type="GeneID" id="14872"/>
<dbReference type="KEGG" id="mmu:14872"/>
<dbReference type="UCSC" id="uc011xgs.1">
    <property type="organism name" value="mouse"/>
</dbReference>
<dbReference type="AGR" id="MGI:106188"/>
<dbReference type="CTD" id="2953"/>
<dbReference type="MGI" id="MGI:106188">
    <property type="gene designation" value="Gstt2"/>
</dbReference>
<dbReference type="VEuPathDB" id="HostDB:ENSMUSG00000033318"/>
<dbReference type="eggNOG" id="KOG0867">
    <property type="taxonomic scope" value="Eukaryota"/>
</dbReference>
<dbReference type="GeneTree" id="ENSGT00940000162786"/>
<dbReference type="HOGENOM" id="CLU_011226_2_0_1"/>
<dbReference type="InParanoid" id="Q61133"/>
<dbReference type="OMA" id="YFRTIWL"/>
<dbReference type="OrthoDB" id="422574at2759"/>
<dbReference type="PhylomeDB" id="Q61133"/>
<dbReference type="TreeFam" id="TF325759"/>
<dbReference type="Reactome" id="R-MMU-156590">
    <property type="pathway name" value="Glutathione conjugation"/>
</dbReference>
<dbReference type="BioGRID-ORCS" id="14872">
    <property type="hits" value="1 hit in 77 CRISPR screens"/>
</dbReference>
<dbReference type="PRO" id="PR:Q61133"/>
<dbReference type="Proteomes" id="UP000000589">
    <property type="component" value="Chromosome 10"/>
</dbReference>
<dbReference type="RNAct" id="Q61133">
    <property type="molecule type" value="protein"/>
</dbReference>
<dbReference type="Bgee" id="ENSMUSG00000033318">
    <property type="expression patterns" value="Expressed in right kidney and 191 other cell types or tissues"/>
</dbReference>
<dbReference type="ExpressionAtlas" id="Q61133">
    <property type="expression patterns" value="baseline and differential"/>
</dbReference>
<dbReference type="GO" id="GO:0005829">
    <property type="term" value="C:cytosol"/>
    <property type="evidence" value="ECO:0000314"/>
    <property type="project" value="MGI"/>
</dbReference>
<dbReference type="GO" id="GO:0005634">
    <property type="term" value="C:nucleus"/>
    <property type="evidence" value="ECO:0000314"/>
    <property type="project" value="MGI"/>
</dbReference>
<dbReference type="GO" id="GO:0004364">
    <property type="term" value="F:glutathione transferase activity"/>
    <property type="evidence" value="ECO:0000266"/>
    <property type="project" value="MGI"/>
</dbReference>
<dbReference type="GO" id="GO:1990830">
    <property type="term" value="P:cellular response to leukemia inhibitory factor"/>
    <property type="evidence" value="ECO:0000270"/>
    <property type="project" value="MGI"/>
</dbReference>
<dbReference type="GO" id="GO:0006749">
    <property type="term" value="P:glutathione metabolic process"/>
    <property type="evidence" value="ECO:0000266"/>
    <property type="project" value="MGI"/>
</dbReference>
<dbReference type="CDD" id="cd03183">
    <property type="entry name" value="GST_C_Theta"/>
    <property type="match status" value="1"/>
</dbReference>
<dbReference type="CDD" id="cd03050">
    <property type="entry name" value="GST_N_Theta"/>
    <property type="match status" value="1"/>
</dbReference>
<dbReference type="FunFam" id="3.40.30.10:FF:000086">
    <property type="entry name" value="Glutathione S-transferase theta-1"/>
    <property type="match status" value="1"/>
</dbReference>
<dbReference type="FunFam" id="1.20.1050.10:FF:000200">
    <property type="entry name" value="Glutathione S-transferase theta-2B"/>
    <property type="match status" value="1"/>
</dbReference>
<dbReference type="Gene3D" id="1.20.1050.10">
    <property type="match status" value="1"/>
</dbReference>
<dbReference type="Gene3D" id="3.40.30.10">
    <property type="entry name" value="Glutaredoxin"/>
    <property type="match status" value="1"/>
</dbReference>
<dbReference type="InterPro" id="IPR010987">
    <property type="entry name" value="Glutathione-S-Trfase_C-like"/>
</dbReference>
<dbReference type="InterPro" id="IPR036282">
    <property type="entry name" value="Glutathione-S-Trfase_C_sf"/>
</dbReference>
<dbReference type="InterPro" id="IPR040079">
    <property type="entry name" value="Glutathione_S-Trfase"/>
</dbReference>
<dbReference type="InterPro" id="IPR004045">
    <property type="entry name" value="Glutathione_S-Trfase_N"/>
</dbReference>
<dbReference type="InterPro" id="IPR004046">
    <property type="entry name" value="GST_C"/>
</dbReference>
<dbReference type="InterPro" id="IPR040077">
    <property type="entry name" value="GST_C_Theta"/>
</dbReference>
<dbReference type="InterPro" id="IPR040075">
    <property type="entry name" value="GST_N_Theta"/>
</dbReference>
<dbReference type="InterPro" id="IPR051369">
    <property type="entry name" value="GST_Theta"/>
</dbReference>
<dbReference type="InterPro" id="IPR036249">
    <property type="entry name" value="Thioredoxin-like_sf"/>
</dbReference>
<dbReference type="PANTHER" id="PTHR43917">
    <property type="match status" value="1"/>
</dbReference>
<dbReference type="PANTHER" id="PTHR43917:SF4">
    <property type="entry name" value="GLUTATHIONE S-TRANSFERASE THETA-2-RELATED"/>
    <property type="match status" value="1"/>
</dbReference>
<dbReference type="Pfam" id="PF00043">
    <property type="entry name" value="GST_C"/>
    <property type="match status" value="1"/>
</dbReference>
<dbReference type="Pfam" id="PF02798">
    <property type="entry name" value="GST_N"/>
    <property type="match status" value="1"/>
</dbReference>
<dbReference type="SFLD" id="SFLDS00019">
    <property type="entry name" value="Glutathione_Transferase_(cytos"/>
    <property type="match status" value="1"/>
</dbReference>
<dbReference type="SFLD" id="SFLDG00358">
    <property type="entry name" value="Main_(cytGST)"/>
    <property type="match status" value="1"/>
</dbReference>
<dbReference type="SUPFAM" id="SSF47616">
    <property type="entry name" value="GST C-terminal domain-like"/>
    <property type="match status" value="1"/>
</dbReference>
<dbReference type="SUPFAM" id="SSF52833">
    <property type="entry name" value="Thioredoxin-like"/>
    <property type="match status" value="1"/>
</dbReference>
<dbReference type="PROSITE" id="PS50405">
    <property type="entry name" value="GST_CTER"/>
    <property type="match status" value="1"/>
</dbReference>
<dbReference type="PROSITE" id="PS50404">
    <property type="entry name" value="GST_NTER"/>
    <property type="match status" value="1"/>
</dbReference>
<evidence type="ECO:0000250" key="1">
    <source>
        <dbReference type="UniProtKB" id="P0CG29"/>
    </source>
</evidence>
<evidence type="ECO:0000250" key="2">
    <source>
        <dbReference type="UniProtKB" id="P0CG30"/>
    </source>
</evidence>
<evidence type="ECO:0000250" key="3">
    <source>
        <dbReference type="UniProtKB" id="P30713"/>
    </source>
</evidence>
<evidence type="ECO:0000269" key="4">
    <source>
    </source>
</evidence>
<evidence type="ECO:0000303" key="5">
    <source>
    </source>
</evidence>
<evidence type="ECO:0000305" key="6"/>
<evidence type="ECO:0000312" key="7">
    <source>
        <dbReference type="MGI" id="MGI:106188"/>
    </source>
</evidence>